<feature type="chain" id="PRO_0000431510" description="RNA polymerase-associated protein LEO1">
    <location>
        <begin position="1"/>
        <end position="430"/>
    </location>
</feature>
<feature type="region of interest" description="Disordered" evidence="3">
    <location>
        <begin position="1"/>
        <end position="128"/>
    </location>
</feature>
<feature type="region of interest" description="Disordered" evidence="3">
    <location>
        <begin position="349"/>
        <end position="430"/>
    </location>
</feature>
<feature type="coiled-coil region" evidence="2">
    <location>
        <begin position="326"/>
        <end position="347"/>
    </location>
</feature>
<feature type="coiled-coil region" evidence="2">
    <location>
        <begin position="409"/>
        <end position="429"/>
    </location>
</feature>
<feature type="compositionally biased region" description="Polar residues" evidence="3">
    <location>
        <begin position="1"/>
        <end position="10"/>
    </location>
</feature>
<feature type="compositionally biased region" description="Low complexity" evidence="3">
    <location>
        <begin position="18"/>
        <end position="30"/>
    </location>
</feature>
<feature type="compositionally biased region" description="Basic and acidic residues" evidence="3">
    <location>
        <begin position="99"/>
        <end position="119"/>
    </location>
</feature>
<keyword id="KW-0010">Activator</keyword>
<keyword id="KW-0175">Coiled coil</keyword>
<keyword id="KW-0963">Cytoplasm</keyword>
<keyword id="KW-0539">Nucleus</keyword>
<keyword id="KW-1185">Reference proteome</keyword>
<keyword id="KW-0804">Transcription</keyword>
<keyword id="KW-0805">Transcription regulation</keyword>
<gene>
    <name evidence="8" type="primary">leo-1</name>
    <name evidence="8" type="ORF">B0035.11</name>
</gene>
<dbReference type="EMBL" id="Z73102">
    <property type="protein sequence ID" value="CAA97406.1"/>
    <property type="molecule type" value="Genomic_DNA"/>
</dbReference>
<dbReference type="PIR" id="T18651">
    <property type="entry name" value="T18651"/>
</dbReference>
<dbReference type="RefSeq" id="NP_502135.1">
    <property type="nucleotide sequence ID" value="NM_069734.5"/>
</dbReference>
<dbReference type="SMR" id="Q17431"/>
<dbReference type="ComplexPortal" id="CPX-966">
    <property type="entry name" value="PAF1 complex"/>
</dbReference>
<dbReference type="FunCoup" id="Q17431">
    <property type="interactions" value="481"/>
</dbReference>
<dbReference type="STRING" id="6239.B0035.11.1"/>
<dbReference type="PaxDb" id="6239-B0035.11"/>
<dbReference type="PeptideAtlas" id="Q17431"/>
<dbReference type="EnsemblMetazoa" id="B0035.11.1">
    <property type="protein sequence ID" value="B0035.11.1"/>
    <property type="gene ID" value="WBGene00007110"/>
</dbReference>
<dbReference type="GeneID" id="178052"/>
<dbReference type="KEGG" id="cel:CELE_B0035.11"/>
<dbReference type="UCSC" id="B0035.11">
    <property type="organism name" value="c. elegans"/>
</dbReference>
<dbReference type="AGR" id="WB:WBGene00007110"/>
<dbReference type="CTD" id="178052"/>
<dbReference type="WormBase" id="B0035.11">
    <property type="protein sequence ID" value="CE05166"/>
    <property type="gene ID" value="WBGene00007110"/>
    <property type="gene designation" value="leo-1"/>
</dbReference>
<dbReference type="eggNOG" id="KOG2428">
    <property type="taxonomic scope" value="Eukaryota"/>
</dbReference>
<dbReference type="GeneTree" id="ENSGT00550000074952"/>
<dbReference type="HOGENOM" id="CLU_638168_0_0_1"/>
<dbReference type="InParanoid" id="Q17431"/>
<dbReference type="OMA" id="TNIYRWS"/>
<dbReference type="OrthoDB" id="20844at2759"/>
<dbReference type="PhylomeDB" id="Q17431"/>
<dbReference type="Reactome" id="R-CEL-112382">
    <property type="pathway name" value="Formation of RNA Pol II elongation complex"/>
</dbReference>
<dbReference type="Reactome" id="R-CEL-201722">
    <property type="pathway name" value="Formation of the beta-catenin:TCF transactivating complex"/>
</dbReference>
<dbReference type="Reactome" id="R-CEL-674695">
    <property type="pathway name" value="RNA Polymerase II Pre-transcription Events"/>
</dbReference>
<dbReference type="Reactome" id="R-CEL-75955">
    <property type="pathway name" value="RNA Polymerase II Transcription Elongation"/>
</dbReference>
<dbReference type="PRO" id="PR:Q17431"/>
<dbReference type="Proteomes" id="UP000001940">
    <property type="component" value="Chromosome IV"/>
</dbReference>
<dbReference type="Bgee" id="WBGene00007110">
    <property type="expression patterns" value="Expressed in embryo and 4 other cell types or tissues"/>
</dbReference>
<dbReference type="GO" id="GO:0016593">
    <property type="term" value="C:Cdc73/Paf1 complex"/>
    <property type="evidence" value="ECO:0000303"/>
    <property type="project" value="ComplexPortal"/>
</dbReference>
<dbReference type="GO" id="GO:0005737">
    <property type="term" value="C:cytoplasm"/>
    <property type="evidence" value="ECO:0007669"/>
    <property type="project" value="UniProtKB-SubCell"/>
</dbReference>
<dbReference type="GO" id="GO:0005634">
    <property type="term" value="C:nucleus"/>
    <property type="evidence" value="ECO:0000314"/>
    <property type="project" value="WormBase"/>
</dbReference>
<dbReference type="GO" id="GO:1990269">
    <property type="term" value="F:RNA polymerase II C-terminal domain phosphoserine binding"/>
    <property type="evidence" value="ECO:0000318"/>
    <property type="project" value="GO_Central"/>
</dbReference>
<dbReference type="GO" id="GO:0032968">
    <property type="term" value="P:positive regulation of transcription elongation by RNA polymerase II"/>
    <property type="evidence" value="ECO:0000318"/>
    <property type="project" value="GO_Central"/>
</dbReference>
<dbReference type="GO" id="GO:0006368">
    <property type="term" value="P:transcription elongation by RNA polymerase II"/>
    <property type="evidence" value="ECO:0000303"/>
    <property type="project" value="ComplexPortal"/>
</dbReference>
<dbReference type="InterPro" id="IPR007149">
    <property type="entry name" value="Leo1"/>
</dbReference>
<dbReference type="PANTHER" id="PTHR23146">
    <property type="entry name" value="LEO1 PROTEIN"/>
    <property type="match status" value="1"/>
</dbReference>
<dbReference type="PANTHER" id="PTHR23146:SF0">
    <property type="entry name" value="RNA POLYMERASE-ASSOCIATED PROTEIN LEO1"/>
    <property type="match status" value="1"/>
</dbReference>
<dbReference type="Pfam" id="PF04004">
    <property type="entry name" value="Leo1"/>
    <property type="match status" value="1"/>
</dbReference>
<comment type="function">
    <text evidence="1">Component of the PAF1 complex which is a multifunctional complex involved in transcription initiation via genetic interactions with TATA-binding proteins, elongation and transcription-coupled histone modification.</text>
</comment>
<comment type="subunit">
    <text evidence="1">Component of the PAF1 complex which consists of at least cdc-73, ctr-9, leo-1, pafo-1 and rtfo-1.</text>
</comment>
<comment type="subcellular location">
    <subcellularLocation>
        <location evidence="4">Nucleus</location>
    </subcellularLocation>
    <subcellularLocation>
        <location evidence="4">Cytoplasm</location>
    </subcellularLocation>
    <text evidence="4 5">Nuclear localization depends on ctr-9, pafo-1 and cdc-73. Located in nuclei before mitosis. Located in the cytoplasm upon mitotic nuclear membrane breakdown. Located in nuclei when nuclear envelope is reassembled in telophase.</text>
</comment>
<comment type="developmental stage">
    <text evidence="4">Expressed in both somatic cells and germ cells from the one-cell stage onwards.</text>
</comment>
<comment type="disruption phenotype">
    <text evidence="4">RNAi-mediated knock-down is maternal effect embryonic lethal. Embryogenesis proceeds more slowly, with embryos displaying defects in the positioning and shape of epidermal cells.</text>
</comment>
<comment type="similarity">
    <text evidence="2">Belongs to the LEO1 family.</text>
</comment>
<reference evidence="7" key="1">
    <citation type="journal article" date="1998" name="Science">
        <title>Genome sequence of the nematode C. elegans: a platform for investigating biology.</title>
        <authorList>
            <consortium name="The C. elegans sequencing consortium"/>
        </authorList>
    </citation>
    <scope>NUCLEOTIDE SEQUENCE [LARGE SCALE GENOMIC DNA]</scope>
    <source>
        <strain evidence="7">Bristol N2</strain>
    </source>
</reference>
<reference evidence="6" key="2">
    <citation type="journal article" date="2014" name="Dev. Biol.">
        <title>The PAF1 complex is involved in embryonic epidermal morphogenesis in Caenorhabditis elegans.</title>
        <authorList>
            <person name="Kubota Y."/>
            <person name="Tsuyama K."/>
            <person name="Takabayashi Y."/>
            <person name="Haruta N."/>
            <person name="Maruyama R."/>
            <person name="Iida N."/>
            <person name="Sugimoto A."/>
        </authorList>
    </citation>
    <scope>SUBCELLULAR LOCATION</scope>
    <scope>DEVELOPMENTAL STAGE</scope>
    <scope>DISRUPTION PHENOTYPE</scope>
</reference>
<evidence type="ECO:0000250" key="1">
    <source>
        <dbReference type="UniProtKB" id="P38439"/>
    </source>
</evidence>
<evidence type="ECO:0000255" key="2"/>
<evidence type="ECO:0000256" key="3">
    <source>
        <dbReference type="SAM" id="MobiDB-lite"/>
    </source>
</evidence>
<evidence type="ECO:0000269" key="4">
    <source>
    </source>
</evidence>
<evidence type="ECO:0000303" key="5">
    <source>
    </source>
</evidence>
<evidence type="ECO:0000305" key="6"/>
<evidence type="ECO:0000312" key="7">
    <source>
        <dbReference type="Proteomes" id="UP000001940"/>
    </source>
</evidence>
<evidence type="ECO:0000312" key="8">
    <source>
        <dbReference type="WormBase" id="B0035.11"/>
    </source>
</evidence>
<name>LEO1_CAEEL</name>
<organism>
    <name type="scientific">Caenorhabditis elegans</name>
    <dbReference type="NCBI Taxonomy" id="6239"/>
    <lineage>
        <taxon>Eukaryota</taxon>
        <taxon>Metazoa</taxon>
        <taxon>Ecdysozoa</taxon>
        <taxon>Nematoda</taxon>
        <taxon>Chromadorea</taxon>
        <taxon>Rhabditida</taxon>
        <taxon>Rhabditina</taxon>
        <taxon>Rhabditomorpha</taxon>
        <taxon>Rhabditoidea</taxon>
        <taxon>Rhabditidae</taxon>
        <taxon>Peloderinae</taxon>
        <taxon>Caenorhabditis</taxon>
    </lineage>
</organism>
<proteinExistence type="evidence at transcript level"/>
<protein>
    <recommendedName>
        <fullName evidence="1">RNA polymerase-associated protein LEO1</fullName>
    </recommendedName>
</protein>
<accession>Q17431</accession>
<sequence>MSSSEGNSDASAPGTPVKSSTPSSRGSSPDSPKKQEPSKKRAILNESDDDDDSRPAPRQLSDSSDDNIHPRGGGEKSSPGAGGGLFGDLSGSSDDDSDREGKPKESNTRARLSDSDAESRGSLNDLQGIVMANPDEIDEDEKAKEHVHDTEMVTGRVTLEYAADPPHFVRMPNFLSVATHPFDPQHYEEDEDDEQAKLDDEGRTRLKLRVENTLRWRVRKDENGKEIRESNAKIVKWDDGTMSLYLGNEIFEVSLVPLNSNNLPHLYVKQPTLMSAQAVLTHRMTFRPHSTDSQTHRKVTLNMADRSRKNAQVKVMDDVGQNPEITRRENARKEEESLRAHIRRTQMVRNNFKVRGPRYAGQYSDDEDMPTSSRKGKKKEAPIIGASSESEDDHADTTKKSGSDSDSDEEYRKRKQQQKKQIVTSDEESD</sequence>